<name>ACYP_ARCFU</name>
<comment type="catalytic activity">
    <reaction>
        <text>an acyl phosphate + H2O = a carboxylate + phosphate + H(+)</text>
        <dbReference type="Rhea" id="RHEA:14965"/>
        <dbReference type="ChEBI" id="CHEBI:15377"/>
        <dbReference type="ChEBI" id="CHEBI:15378"/>
        <dbReference type="ChEBI" id="CHEBI:29067"/>
        <dbReference type="ChEBI" id="CHEBI:43474"/>
        <dbReference type="ChEBI" id="CHEBI:59918"/>
        <dbReference type="EC" id="3.6.1.7"/>
    </reaction>
</comment>
<comment type="similarity">
    <text evidence="2">Belongs to the acylphosphatase family.</text>
</comment>
<feature type="chain" id="PRO_0000158557" description="Acylphosphatase">
    <location>
        <begin position="1"/>
        <end position="89"/>
    </location>
</feature>
<feature type="domain" description="Acylphosphatase-like" evidence="1">
    <location>
        <begin position="3"/>
        <end position="89"/>
    </location>
</feature>
<feature type="active site" evidence="1">
    <location>
        <position position="18"/>
    </location>
</feature>
<feature type="active site" evidence="1">
    <location>
        <position position="36"/>
    </location>
</feature>
<protein>
    <recommendedName>
        <fullName>Acylphosphatase</fullName>
        <ecNumber>3.6.1.7</ecNumber>
    </recommendedName>
    <alternativeName>
        <fullName>Acylphosphate phosphohydrolase</fullName>
    </alternativeName>
</protein>
<accession>O29440</accession>
<keyword id="KW-0378">Hydrolase</keyword>
<keyword id="KW-1185">Reference proteome</keyword>
<proteinExistence type="inferred from homology"/>
<gene>
    <name type="primary">acyP</name>
    <name type="ordered locus">AF_0818</name>
</gene>
<reference key="1">
    <citation type="journal article" date="1997" name="Nature">
        <title>The complete genome sequence of the hyperthermophilic, sulphate-reducing archaeon Archaeoglobus fulgidus.</title>
        <authorList>
            <person name="Klenk H.-P."/>
            <person name="Clayton R.A."/>
            <person name="Tomb J.-F."/>
            <person name="White O."/>
            <person name="Nelson K.E."/>
            <person name="Ketchum K.A."/>
            <person name="Dodson R.J."/>
            <person name="Gwinn M.L."/>
            <person name="Hickey E.K."/>
            <person name="Peterson J.D."/>
            <person name="Richardson D.L."/>
            <person name="Kerlavage A.R."/>
            <person name="Graham D.E."/>
            <person name="Kyrpides N.C."/>
            <person name="Fleischmann R.D."/>
            <person name="Quackenbush J."/>
            <person name="Lee N.H."/>
            <person name="Sutton G.G."/>
            <person name="Gill S.R."/>
            <person name="Kirkness E.F."/>
            <person name="Dougherty B.A."/>
            <person name="McKenney K."/>
            <person name="Adams M.D."/>
            <person name="Loftus B.J."/>
            <person name="Peterson S.N."/>
            <person name="Reich C.I."/>
            <person name="McNeil L.K."/>
            <person name="Badger J.H."/>
            <person name="Glodek A."/>
            <person name="Zhou L."/>
            <person name="Overbeek R."/>
            <person name="Gocayne J.D."/>
            <person name="Weidman J.F."/>
            <person name="McDonald L.A."/>
            <person name="Utterback T.R."/>
            <person name="Cotton M.D."/>
            <person name="Spriggs T."/>
            <person name="Artiach P."/>
            <person name="Kaine B.P."/>
            <person name="Sykes S.M."/>
            <person name="Sadow P.W."/>
            <person name="D'Andrea K.P."/>
            <person name="Bowman C."/>
            <person name="Fujii C."/>
            <person name="Garland S.A."/>
            <person name="Mason T.M."/>
            <person name="Olsen G.J."/>
            <person name="Fraser C.M."/>
            <person name="Smith H.O."/>
            <person name="Woese C.R."/>
            <person name="Venter J.C."/>
        </authorList>
    </citation>
    <scope>NUCLEOTIDE SEQUENCE [LARGE SCALE GENOMIC DNA]</scope>
    <source>
        <strain>ATCC 49558 / DSM 4304 / JCM 9628 / NBRC 100126 / VC-16</strain>
    </source>
</reference>
<dbReference type="EC" id="3.6.1.7"/>
<dbReference type="EMBL" id="AE000782">
    <property type="protein sequence ID" value="AAB90416.1"/>
    <property type="molecule type" value="Genomic_DNA"/>
</dbReference>
<dbReference type="PIR" id="B69352">
    <property type="entry name" value="B69352"/>
</dbReference>
<dbReference type="RefSeq" id="WP_010878321.1">
    <property type="nucleotide sequence ID" value="NC_000917.1"/>
</dbReference>
<dbReference type="SMR" id="O29440"/>
<dbReference type="STRING" id="224325.AF_0818"/>
<dbReference type="PaxDb" id="224325-AF_0818"/>
<dbReference type="EnsemblBacteria" id="AAB90416">
    <property type="protein sequence ID" value="AAB90416"/>
    <property type="gene ID" value="AF_0818"/>
</dbReference>
<dbReference type="KEGG" id="afu:AF_0818"/>
<dbReference type="eggNOG" id="arCOG01674">
    <property type="taxonomic scope" value="Archaea"/>
</dbReference>
<dbReference type="HOGENOM" id="CLU_141932_2_1_2"/>
<dbReference type="OrthoDB" id="6643at2157"/>
<dbReference type="PhylomeDB" id="O29440"/>
<dbReference type="Proteomes" id="UP000002199">
    <property type="component" value="Chromosome"/>
</dbReference>
<dbReference type="GO" id="GO:0003998">
    <property type="term" value="F:acylphosphatase activity"/>
    <property type="evidence" value="ECO:0007669"/>
    <property type="project" value="UniProtKB-EC"/>
</dbReference>
<dbReference type="Gene3D" id="3.30.70.100">
    <property type="match status" value="1"/>
</dbReference>
<dbReference type="InterPro" id="IPR020456">
    <property type="entry name" value="Acylphosphatase"/>
</dbReference>
<dbReference type="InterPro" id="IPR001792">
    <property type="entry name" value="Acylphosphatase-like_dom"/>
</dbReference>
<dbReference type="InterPro" id="IPR036046">
    <property type="entry name" value="Acylphosphatase-like_dom_sf"/>
</dbReference>
<dbReference type="InterPro" id="IPR017968">
    <property type="entry name" value="Acylphosphatase_CS"/>
</dbReference>
<dbReference type="NCBIfam" id="NF011009">
    <property type="entry name" value="PRK14435.1"/>
    <property type="match status" value="1"/>
</dbReference>
<dbReference type="PANTHER" id="PTHR47268">
    <property type="entry name" value="ACYLPHOSPHATASE"/>
    <property type="match status" value="1"/>
</dbReference>
<dbReference type="PANTHER" id="PTHR47268:SF4">
    <property type="entry name" value="ACYLPHOSPHATASE"/>
    <property type="match status" value="1"/>
</dbReference>
<dbReference type="Pfam" id="PF00708">
    <property type="entry name" value="Acylphosphatase"/>
    <property type="match status" value="1"/>
</dbReference>
<dbReference type="SUPFAM" id="SSF54975">
    <property type="entry name" value="Acylphosphatase/BLUF domain-like"/>
    <property type="match status" value="1"/>
</dbReference>
<dbReference type="PROSITE" id="PS00150">
    <property type="entry name" value="ACYLPHOSPHATASE_1"/>
    <property type="match status" value="1"/>
</dbReference>
<dbReference type="PROSITE" id="PS00151">
    <property type="entry name" value="ACYLPHOSPHATASE_2"/>
    <property type="match status" value="1"/>
</dbReference>
<dbReference type="PROSITE" id="PS51160">
    <property type="entry name" value="ACYLPHOSPHATASE_3"/>
    <property type="match status" value="1"/>
</dbReference>
<evidence type="ECO:0000255" key="1">
    <source>
        <dbReference type="PROSITE-ProRule" id="PRU00520"/>
    </source>
</evidence>
<evidence type="ECO:0000305" key="2"/>
<sequence length="89" mass="9950">MIALEIYVSGNVQGVGFRYFTRRVARELGIKGYVKNLPDGRVYIYAVGEELTLDKFLSAVKSGPPLATVRGVEVKKAEIENYESFEVAY</sequence>
<organism>
    <name type="scientific">Archaeoglobus fulgidus (strain ATCC 49558 / DSM 4304 / JCM 9628 / NBRC 100126 / VC-16)</name>
    <dbReference type="NCBI Taxonomy" id="224325"/>
    <lineage>
        <taxon>Archaea</taxon>
        <taxon>Methanobacteriati</taxon>
        <taxon>Methanobacteriota</taxon>
        <taxon>Archaeoglobi</taxon>
        <taxon>Archaeoglobales</taxon>
        <taxon>Archaeoglobaceae</taxon>
        <taxon>Archaeoglobus</taxon>
    </lineage>
</organism>